<dbReference type="EC" id="2.5.1.7" evidence="1"/>
<dbReference type="EMBL" id="AE013218">
    <property type="protein sequence ID" value="AAM67925.1"/>
    <property type="molecule type" value="Genomic_DNA"/>
</dbReference>
<dbReference type="RefSeq" id="WP_011053892.1">
    <property type="nucleotide sequence ID" value="NC_004061.1"/>
</dbReference>
<dbReference type="SMR" id="Q8K9G4"/>
<dbReference type="STRING" id="198804.BUsg_373"/>
<dbReference type="GeneID" id="93003843"/>
<dbReference type="KEGG" id="bas:BUsg_373"/>
<dbReference type="eggNOG" id="COG0766">
    <property type="taxonomic scope" value="Bacteria"/>
</dbReference>
<dbReference type="HOGENOM" id="CLU_027387_0_0_6"/>
<dbReference type="UniPathway" id="UPA00219"/>
<dbReference type="Proteomes" id="UP000000416">
    <property type="component" value="Chromosome"/>
</dbReference>
<dbReference type="GO" id="GO:0005737">
    <property type="term" value="C:cytoplasm"/>
    <property type="evidence" value="ECO:0007669"/>
    <property type="project" value="UniProtKB-SubCell"/>
</dbReference>
<dbReference type="GO" id="GO:0008760">
    <property type="term" value="F:UDP-N-acetylglucosamine 1-carboxyvinyltransferase activity"/>
    <property type="evidence" value="ECO:0007669"/>
    <property type="project" value="UniProtKB-UniRule"/>
</dbReference>
<dbReference type="GO" id="GO:0051301">
    <property type="term" value="P:cell division"/>
    <property type="evidence" value="ECO:0007669"/>
    <property type="project" value="UniProtKB-KW"/>
</dbReference>
<dbReference type="GO" id="GO:0071555">
    <property type="term" value="P:cell wall organization"/>
    <property type="evidence" value="ECO:0007669"/>
    <property type="project" value="UniProtKB-KW"/>
</dbReference>
<dbReference type="GO" id="GO:0009252">
    <property type="term" value="P:peptidoglycan biosynthetic process"/>
    <property type="evidence" value="ECO:0007669"/>
    <property type="project" value="UniProtKB-UniRule"/>
</dbReference>
<dbReference type="GO" id="GO:0008360">
    <property type="term" value="P:regulation of cell shape"/>
    <property type="evidence" value="ECO:0007669"/>
    <property type="project" value="UniProtKB-KW"/>
</dbReference>
<dbReference type="GO" id="GO:0019277">
    <property type="term" value="P:UDP-N-acetylgalactosamine biosynthetic process"/>
    <property type="evidence" value="ECO:0007669"/>
    <property type="project" value="InterPro"/>
</dbReference>
<dbReference type="CDD" id="cd01555">
    <property type="entry name" value="UdpNAET"/>
    <property type="match status" value="1"/>
</dbReference>
<dbReference type="FunFam" id="3.65.10.10:FF:000001">
    <property type="entry name" value="UDP-N-acetylglucosamine 1-carboxyvinyltransferase"/>
    <property type="match status" value="1"/>
</dbReference>
<dbReference type="Gene3D" id="3.65.10.10">
    <property type="entry name" value="Enolpyruvate transferase domain"/>
    <property type="match status" value="2"/>
</dbReference>
<dbReference type="HAMAP" id="MF_00111">
    <property type="entry name" value="MurA"/>
    <property type="match status" value="1"/>
</dbReference>
<dbReference type="InterPro" id="IPR001986">
    <property type="entry name" value="Enolpyruvate_Tfrase_dom"/>
</dbReference>
<dbReference type="InterPro" id="IPR036968">
    <property type="entry name" value="Enolpyruvate_Tfrase_sf"/>
</dbReference>
<dbReference type="InterPro" id="IPR050068">
    <property type="entry name" value="MurA_subfamily"/>
</dbReference>
<dbReference type="InterPro" id="IPR013792">
    <property type="entry name" value="RNA3'P_cycl/enolpyr_Trfase_a/b"/>
</dbReference>
<dbReference type="InterPro" id="IPR005750">
    <property type="entry name" value="UDP_GlcNAc_COvinyl_MurA"/>
</dbReference>
<dbReference type="NCBIfam" id="TIGR01072">
    <property type="entry name" value="murA"/>
    <property type="match status" value="1"/>
</dbReference>
<dbReference type="NCBIfam" id="NF006873">
    <property type="entry name" value="PRK09369.1"/>
    <property type="match status" value="1"/>
</dbReference>
<dbReference type="PANTHER" id="PTHR43783">
    <property type="entry name" value="UDP-N-ACETYLGLUCOSAMINE 1-CARBOXYVINYLTRANSFERASE"/>
    <property type="match status" value="1"/>
</dbReference>
<dbReference type="PANTHER" id="PTHR43783:SF1">
    <property type="entry name" value="UDP-N-ACETYLGLUCOSAMINE 1-CARBOXYVINYLTRANSFERASE"/>
    <property type="match status" value="1"/>
</dbReference>
<dbReference type="Pfam" id="PF00275">
    <property type="entry name" value="EPSP_synthase"/>
    <property type="match status" value="1"/>
</dbReference>
<dbReference type="SUPFAM" id="SSF55205">
    <property type="entry name" value="EPT/RTPC-like"/>
    <property type="match status" value="1"/>
</dbReference>
<feature type="chain" id="PRO_0000178854" description="UDP-N-acetylglucosamine 1-carboxyvinyltransferase">
    <location>
        <begin position="1"/>
        <end position="417"/>
    </location>
</feature>
<feature type="active site" description="Proton donor" evidence="1">
    <location>
        <position position="116"/>
    </location>
</feature>
<feature type="binding site" evidence="1">
    <location>
        <begin position="22"/>
        <end position="23"/>
    </location>
    <ligand>
        <name>phosphoenolpyruvate</name>
        <dbReference type="ChEBI" id="CHEBI:58702"/>
    </ligand>
</feature>
<feature type="binding site" evidence="1">
    <location>
        <position position="92"/>
    </location>
    <ligand>
        <name>UDP-N-acetyl-alpha-D-glucosamine</name>
        <dbReference type="ChEBI" id="CHEBI:57705"/>
    </ligand>
</feature>
<feature type="binding site" evidence="1">
    <location>
        <begin position="121"/>
        <end position="125"/>
    </location>
    <ligand>
        <name>UDP-N-acetyl-alpha-D-glucosamine</name>
        <dbReference type="ChEBI" id="CHEBI:57705"/>
    </ligand>
</feature>
<feature type="binding site" evidence="1">
    <location>
        <position position="306"/>
    </location>
    <ligand>
        <name>UDP-N-acetyl-alpha-D-glucosamine</name>
        <dbReference type="ChEBI" id="CHEBI:57705"/>
    </ligand>
</feature>
<feature type="binding site" evidence="1">
    <location>
        <position position="328"/>
    </location>
    <ligand>
        <name>UDP-N-acetyl-alpha-D-glucosamine</name>
        <dbReference type="ChEBI" id="CHEBI:57705"/>
    </ligand>
</feature>
<feature type="modified residue" description="2-(S-cysteinyl)pyruvic acid O-phosphothioketal" evidence="1">
    <location>
        <position position="116"/>
    </location>
</feature>
<sequence length="417" mass="45757">MNKLYIEGDKKLNGNVIISGSKNAALPILFMTILTEKKIKISNVPKLRDINIAIQLLKSLGAQIKYKKKNLYIDTSSIKIHSPPYDLTKQIRASIWMLAPLLIRFGKAKIFLPGGCKIGARPIDLHIKGLIALGAKIILEKNYISASIKKPLTGKRIYIEKISVGATITVMSAATLAQGTTIIENAAQEPEIIDTAKFLNTLGANIIGAGSNRIFIKGVLTLIGGKHKIIPDRIETGTFLIAAAISKGYIICHDTEPKYLKNVLMKLSESGAEIKTGKDWIQLDMRGKKPKSINISTSPYPGFPTDMQPQFALLNSISQSKGTITENIFENRFIYTSELIKMGAKIKIKNNSIVCKGVPNLYSQNVFSNDLRGSATLVLAGCIARGTTTVDNIHHFERGYEAFSEKLNKLGANIKYI</sequence>
<accession>Q8K9G4</accession>
<reference key="1">
    <citation type="journal article" date="2002" name="Science">
        <title>50 million years of genomic stasis in endosymbiotic bacteria.</title>
        <authorList>
            <person name="Tamas I."/>
            <person name="Klasson L."/>
            <person name="Canbaeck B."/>
            <person name="Naeslund A.K."/>
            <person name="Eriksson A.-S."/>
            <person name="Wernegreen J.J."/>
            <person name="Sandstroem J.P."/>
            <person name="Moran N.A."/>
            <person name="Andersson S.G.E."/>
        </authorList>
    </citation>
    <scope>NUCLEOTIDE SEQUENCE [LARGE SCALE GENOMIC DNA]</scope>
    <source>
        <strain>Sg</strain>
    </source>
</reference>
<evidence type="ECO:0000255" key="1">
    <source>
        <dbReference type="HAMAP-Rule" id="MF_00111"/>
    </source>
</evidence>
<keyword id="KW-0131">Cell cycle</keyword>
<keyword id="KW-0132">Cell division</keyword>
<keyword id="KW-0133">Cell shape</keyword>
<keyword id="KW-0961">Cell wall biogenesis/degradation</keyword>
<keyword id="KW-0963">Cytoplasm</keyword>
<keyword id="KW-0573">Peptidoglycan synthesis</keyword>
<keyword id="KW-0670">Pyruvate</keyword>
<keyword id="KW-0808">Transferase</keyword>
<protein>
    <recommendedName>
        <fullName evidence="1">UDP-N-acetylglucosamine 1-carboxyvinyltransferase</fullName>
        <ecNumber evidence="1">2.5.1.7</ecNumber>
    </recommendedName>
    <alternativeName>
        <fullName evidence="1">Enoylpyruvate transferase</fullName>
    </alternativeName>
    <alternativeName>
        <fullName evidence="1">UDP-N-acetylglucosamine enolpyruvyl transferase</fullName>
        <shortName evidence="1">EPT</shortName>
    </alternativeName>
</protein>
<proteinExistence type="inferred from homology"/>
<name>MURA_BUCAP</name>
<gene>
    <name evidence="1" type="primary">murA</name>
    <name type="ordered locus">BUsg_373</name>
</gene>
<comment type="function">
    <text evidence="1">Cell wall formation. Adds enolpyruvyl to UDP-N-acetylglucosamine.</text>
</comment>
<comment type="catalytic activity">
    <reaction evidence="1">
        <text>phosphoenolpyruvate + UDP-N-acetyl-alpha-D-glucosamine = UDP-N-acetyl-3-O-(1-carboxyvinyl)-alpha-D-glucosamine + phosphate</text>
        <dbReference type="Rhea" id="RHEA:18681"/>
        <dbReference type="ChEBI" id="CHEBI:43474"/>
        <dbReference type="ChEBI" id="CHEBI:57705"/>
        <dbReference type="ChEBI" id="CHEBI:58702"/>
        <dbReference type="ChEBI" id="CHEBI:68483"/>
        <dbReference type="EC" id="2.5.1.7"/>
    </reaction>
</comment>
<comment type="pathway">
    <text evidence="1">Cell wall biogenesis; peptidoglycan biosynthesis.</text>
</comment>
<comment type="subcellular location">
    <subcellularLocation>
        <location evidence="1">Cytoplasm</location>
    </subcellularLocation>
</comment>
<comment type="similarity">
    <text evidence="1">Belongs to the EPSP synthase family. MurA subfamily.</text>
</comment>
<organism>
    <name type="scientific">Buchnera aphidicola subsp. Schizaphis graminum (strain Sg)</name>
    <dbReference type="NCBI Taxonomy" id="198804"/>
    <lineage>
        <taxon>Bacteria</taxon>
        <taxon>Pseudomonadati</taxon>
        <taxon>Pseudomonadota</taxon>
        <taxon>Gammaproteobacteria</taxon>
        <taxon>Enterobacterales</taxon>
        <taxon>Erwiniaceae</taxon>
        <taxon>Buchnera</taxon>
    </lineage>
</organism>